<gene>
    <name evidence="1" type="primary">glmS</name>
    <name type="ordered locus">BT_0554</name>
</gene>
<proteinExistence type="inferred from homology"/>
<feature type="initiator methionine" description="Removed" evidence="1">
    <location>
        <position position="1"/>
    </location>
</feature>
<feature type="chain" id="PRO_0000135301" description="Glutamine--fructose-6-phosphate aminotransferase [isomerizing]">
    <location>
        <begin position="2"/>
        <end position="614"/>
    </location>
</feature>
<feature type="domain" description="Glutamine amidotransferase type-2" evidence="1">
    <location>
        <begin position="2"/>
        <end position="221"/>
    </location>
</feature>
<feature type="domain" description="SIS 1" evidence="1">
    <location>
        <begin position="291"/>
        <end position="430"/>
    </location>
</feature>
<feature type="domain" description="SIS 2" evidence="1">
    <location>
        <begin position="463"/>
        <end position="604"/>
    </location>
</feature>
<feature type="active site" description="Nucleophile; for GATase activity" evidence="1">
    <location>
        <position position="2"/>
    </location>
</feature>
<feature type="active site" description="For Fru-6P isomerization activity" evidence="1">
    <location>
        <position position="609"/>
    </location>
</feature>
<keyword id="KW-0032">Aminotransferase</keyword>
<keyword id="KW-0963">Cytoplasm</keyword>
<keyword id="KW-0315">Glutamine amidotransferase</keyword>
<keyword id="KW-1185">Reference proteome</keyword>
<keyword id="KW-0677">Repeat</keyword>
<keyword id="KW-0808">Transferase</keyword>
<protein>
    <recommendedName>
        <fullName evidence="1">Glutamine--fructose-6-phosphate aminotransferase [isomerizing]</fullName>
        <ecNumber evidence="1">2.6.1.16</ecNumber>
    </recommendedName>
    <alternativeName>
        <fullName evidence="1">D-fructose-6-phosphate amidotransferase</fullName>
    </alternativeName>
    <alternativeName>
        <fullName evidence="1">GFAT</fullName>
    </alternativeName>
    <alternativeName>
        <fullName evidence="1">Glucosamine-6-phosphate synthase</fullName>
    </alternativeName>
    <alternativeName>
        <fullName evidence="1">Hexosephosphate aminotransferase</fullName>
    </alternativeName>
    <alternativeName>
        <fullName evidence="1">L-glutamine--D-fructose-6-phosphate amidotransferase</fullName>
    </alternativeName>
</protein>
<reference key="1">
    <citation type="journal article" date="2003" name="Science">
        <title>A genomic view of the human-Bacteroides thetaiotaomicron symbiosis.</title>
        <authorList>
            <person name="Xu J."/>
            <person name="Bjursell M.K."/>
            <person name="Himrod J."/>
            <person name="Deng S."/>
            <person name="Carmichael L.K."/>
            <person name="Chiang H.C."/>
            <person name="Hooper L.V."/>
            <person name="Gordon J.I."/>
        </authorList>
    </citation>
    <scope>NUCLEOTIDE SEQUENCE [LARGE SCALE GENOMIC DNA]</scope>
    <source>
        <strain>ATCC 29148 / DSM 2079 / JCM 5827 / CCUG 10774 / NCTC 10582 / VPI-5482 / E50</strain>
    </source>
</reference>
<name>GLMS_BACTN</name>
<dbReference type="EC" id="2.6.1.16" evidence="1"/>
<dbReference type="EMBL" id="AE015928">
    <property type="protein sequence ID" value="AAO75661.1"/>
    <property type="molecule type" value="Genomic_DNA"/>
</dbReference>
<dbReference type="RefSeq" id="NP_809467.1">
    <property type="nucleotide sequence ID" value="NC_004663.1"/>
</dbReference>
<dbReference type="RefSeq" id="WP_008765067.1">
    <property type="nucleotide sequence ID" value="NC_004663.1"/>
</dbReference>
<dbReference type="SMR" id="Q8AAB1"/>
<dbReference type="FunCoup" id="Q8AAB1">
    <property type="interactions" value="446"/>
</dbReference>
<dbReference type="STRING" id="226186.BT_0554"/>
<dbReference type="PaxDb" id="226186-BT_0554"/>
<dbReference type="EnsemblBacteria" id="AAO75661">
    <property type="protein sequence ID" value="AAO75661"/>
    <property type="gene ID" value="BT_0554"/>
</dbReference>
<dbReference type="GeneID" id="60926511"/>
<dbReference type="KEGG" id="bth:BT_0554"/>
<dbReference type="PATRIC" id="fig|226186.12.peg.554"/>
<dbReference type="eggNOG" id="COG0449">
    <property type="taxonomic scope" value="Bacteria"/>
</dbReference>
<dbReference type="HOGENOM" id="CLU_012520_5_2_10"/>
<dbReference type="InParanoid" id="Q8AAB1"/>
<dbReference type="OrthoDB" id="106547at2"/>
<dbReference type="Proteomes" id="UP000001414">
    <property type="component" value="Chromosome"/>
</dbReference>
<dbReference type="GO" id="GO:0005829">
    <property type="term" value="C:cytosol"/>
    <property type="evidence" value="ECO:0000318"/>
    <property type="project" value="GO_Central"/>
</dbReference>
<dbReference type="GO" id="GO:0097367">
    <property type="term" value="F:carbohydrate derivative binding"/>
    <property type="evidence" value="ECO:0007669"/>
    <property type="project" value="InterPro"/>
</dbReference>
<dbReference type="GO" id="GO:0004360">
    <property type="term" value="F:glutamine-fructose-6-phosphate transaminase (isomerizing) activity"/>
    <property type="evidence" value="ECO:0000318"/>
    <property type="project" value="GO_Central"/>
</dbReference>
<dbReference type="GO" id="GO:0005975">
    <property type="term" value="P:carbohydrate metabolic process"/>
    <property type="evidence" value="ECO:0007669"/>
    <property type="project" value="UniProtKB-UniRule"/>
</dbReference>
<dbReference type="GO" id="GO:0006002">
    <property type="term" value="P:fructose 6-phosphate metabolic process"/>
    <property type="evidence" value="ECO:0000318"/>
    <property type="project" value="GO_Central"/>
</dbReference>
<dbReference type="GO" id="GO:0006487">
    <property type="term" value="P:protein N-linked glycosylation"/>
    <property type="evidence" value="ECO:0000318"/>
    <property type="project" value="GO_Central"/>
</dbReference>
<dbReference type="GO" id="GO:0006047">
    <property type="term" value="P:UDP-N-acetylglucosamine metabolic process"/>
    <property type="evidence" value="ECO:0000318"/>
    <property type="project" value="GO_Central"/>
</dbReference>
<dbReference type="CDD" id="cd00714">
    <property type="entry name" value="GFAT"/>
    <property type="match status" value="1"/>
</dbReference>
<dbReference type="CDD" id="cd05008">
    <property type="entry name" value="SIS_GlmS_GlmD_1"/>
    <property type="match status" value="1"/>
</dbReference>
<dbReference type="CDD" id="cd05009">
    <property type="entry name" value="SIS_GlmS_GlmD_2"/>
    <property type="match status" value="1"/>
</dbReference>
<dbReference type="FunFam" id="3.40.50.10490:FF:000001">
    <property type="entry name" value="Glutamine--fructose-6-phosphate aminotransferase [isomerizing]"/>
    <property type="match status" value="1"/>
</dbReference>
<dbReference type="FunFam" id="3.40.50.10490:FF:000002">
    <property type="entry name" value="Glutamine--fructose-6-phosphate aminotransferase [isomerizing]"/>
    <property type="match status" value="1"/>
</dbReference>
<dbReference type="FunFam" id="3.60.20.10:FF:000006">
    <property type="entry name" value="Glutamine--fructose-6-phosphate aminotransferase [isomerizing]"/>
    <property type="match status" value="1"/>
</dbReference>
<dbReference type="Gene3D" id="3.40.50.10490">
    <property type="entry name" value="Glucose-6-phosphate isomerase like protein, domain 1"/>
    <property type="match status" value="2"/>
</dbReference>
<dbReference type="Gene3D" id="3.60.20.10">
    <property type="entry name" value="Glutamine Phosphoribosylpyrophosphate, subunit 1, domain 1"/>
    <property type="match status" value="1"/>
</dbReference>
<dbReference type="HAMAP" id="MF_00164">
    <property type="entry name" value="GlmS"/>
    <property type="match status" value="1"/>
</dbReference>
<dbReference type="InterPro" id="IPR017932">
    <property type="entry name" value="GATase_2_dom"/>
</dbReference>
<dbReference type="InterPro" id="IPR005855">
    <property type="entry name" value="GFAT"/>
</dbReference>
<dbReference type="InterPro" id="IPR047084">
    <property type="entry name" value="GFAT_N"/>
</dbReference>
<dbReference type="InterPro" id="IPR035466">
    <property type="entry name" value="GlmS/AgaS_SIS"/>
</dbReference>
<dbReference type="InterPro" id="IPR035490">
    <property type="entry name" value="GlmS/FrlB_SIS"/>
</dbReference>
<dbReference type="InterPro" id="IPR029055">
    <property type="entry name" value="Ntn_hydrolases_N"/>
</dbReference>
<dbReference type="InterPro" id="IPR001347">
    <property type="entry name" value="SIS_dom"/>
</dbReference>
<dbReference type="InterPro" id="IPR046348">
    <property type="entry name" value="SIS_dom_sf"/>
</dbReference>
<dbReference type="NCBIfam" id="TIGR01135">
    <property type="entry name" value="glmS"/>
    <property type="match status" value="1"/>
</dbReference>
<dbReference type="NCBIfam" id="NF001484">
    <property type="entry name" value="PRK00331.1"/>
    <property type="match status" value="1"/>
</dbReference>
<dbReference type="PANTHER" id="PTHR10937">
    <property type="entry name" value="GLUCOSAMINE--FRUCTOSE-6-PHOSPHATE AMINOTRANSFERASE, ISOMERIZING"/>
    <property type="match status" value="1"/>
</dbReference>
<dbReference type="PANTHER" id="PTHR10937:SF0">
    <property type="entry name" value="GLUTAMINE--FRUCTOSE-6-PHOSPHATE TRANSAMINASE (ISOMERIZING)"/>
    <property type="match status" value="1"/>
</dbReference>
<dbReference type="Pfam" id="PF13522">
    <property type="entry name" value="GATase_6"/>
    <property type="match status" value="1"/>
</dbReference>
<dbReference type="Pfam" id="PF01380">
    <property type="entry name" value="SIS"/>
    <property type="match status" value="2"/>
</dbReference>
<dbReference type="SUPFAM" id="SSF56235">
    <property type="entry name" value="N-terminal nucleophile aminohydrolases (Ntn hydrolases)"/>
    <property type="match status" value="1"/>
</dbReference>
<dbReference type="SUPFAM" id="SSF53697">
    <property type="entry name" value="SIS domain"/>
    <property type="match status" value="1"/>
</dbReference>
<dbReference type="PROSITE" id="PS51278">
    <property type="entry name" value="GATASE_TYPE_2"/>
    <property type="match status" value="1"/>
</dbReference>
<dbReference type="PROSITE" id="PS51464">
    <property type="entry name" value="SIS"/>
    <property type="match status" value="2"/>
</dbReference>
<comment type="function">
    <text evidence="1">Catalyzes the first step in hexosamine metabolism, converting fructose-6P into glucosamine-6P using glutamine as a nitrogen source.</text>
</comment>
<comment type="catalytic activity">
    <reaction evidence="1">
        <text>D-fructose 6-phosphate + L-glutamine = D-glucosamine 6-phosphate + L-glutamate</text>
        <dbReference type="Rhea" id="RHEA:13237"/>
        <dbReference type="ChEBI" id="CHEBI:29985"/>
        <dbReference type="ChEBI" id="CHEBI:58359"/>
        <dbReference type="ChEBI" id="CHEBI:58725"/>
        <dbReference type="ChEBI" id="CHEBI:61527"/>
        <dbReference type="EC" id="2.6.1.16"/>
    </reaction>
</comment>
<comment type="subunit">
    <text evidence="1">Homodimer.</text>
</comment>
<comment type="subcellular location">
    <subcellularLocation>
        <location evidence="1">Cytoplasm</location>
    </subcellularLocation>
</comment>
<sequence>MCGIVGYIGKRKAYPILIKGLKRLEYRGYDSAGVALISDNQQLNVYKTKGKVSELENFVTQKDISGTVGIAHTRWATHGEPCSVNAHPHYSSSEKLALIHNGIIENYAVLKEKLQAKGYVFKSSTDTEVLVQLIEYMKVTNRVDLLTAVQLALNEVIGAYAIAILDKEHPEEIIAARKSSPLVVGIGEDEFFLASDATPIVEYTDKVVYLEDGEIAVINRGKELKVVDLSNVEMTPEVKKVELKLGQLEKGGYPHFMLKEIFEQPDCIHDCMRGRINVEANNVVLSAVIDYKEKLLNAKRFIIVACGTSWHAGLIGKHLIESFCRIPVEVEYASEFRYRDPVIDEHDVVIAISQSGETADTLAAVELAKSRGAFIYGICNAIGSSIPRATHTGSYIHVGPEIGVASTKAFTGQVTVLTMLALTLAREKGTIDETQYLNIVRELNSIPGKMKEVLKLNDKLAELSKTFTYAHNFIYLGRGYSYPVALEGALKLKEISYIHAEGYPAAEMKHGPIALIDAEMPVVVIATQNGLYEKVLSNIQEIKARKGKVIAFVTKGDTVISKIADCSIELPETIECLDPLITTVPLQLLAYHIAVCKGMDVDQPRNLAKSVTVE</sequence>
<organism>
    <name type="scientific">Bacteroides thetaiotaomicron (strain ATCC 29148 / DSM 2079 / JCM 5827 / CCUG 10774 / NCTC 10582 / VPI-5482 / E50)</name>
    <dbReference type="NCBI Taxonomy" id="226186"/>
    <lineage>
        <taxon>Bacteria</taxon>
        <taxon>Pseudomonadati</taxon>
        <taxon>Bacteroidota</taxon>
        <taxon>Bacteroidia</taxon>
        <taxon>Bacteroidales</taxon>
        <taxon>Bacteroidaceae</taxon>
        <taxon>Bacteroides</taxon>
    </lineage>
</organism>
<accession>Q8AAB1</accession>
<evidence type="ECO:0000255" key="1">
    <source>
        <dbReference type="HAMAP-Rule" id="MF_00164"/>
    </source>
</evidence>